<keyword id="KW-0002">3D-structure</keyword>
<keyword id="KW-0046">Antibiotic resistance</keyword>
<keyword id="KW-0131">Cell cycle</keyword>
<keyword id="KW-0132">Cell division</keyword>
<keyword id="KW-0133">Cell shape</keyword>
<keyword id="KW-0961">Cell wall biogenesis/degradation</keyword>
<keyword id="KW-0963">Cytoplasm</keyword>
<keyword id="KW-0326">Glycosidase</keyword>
<keyword id="KW-0378">Hydrolase</keyword>
<keyword id="KW-0573">Peptidoglycan synthesis</keyword>
<keyword id="KW-1185">Reference proteome</keyword>
<dbReference type="EC" id="3.2.1.52" evidence="1"/>
<dbReference type="EMBL" id="AE006468">
    <property type="protein sequence ID" value="AAL20138.1"/>
    <property type="molecule type" value="Genomic_DNA"/>
</dbReference>
<dbReference type="RefSeq" id="NP_460179.1">
    <property type="nucleotide sequence ID" value="NC_003197.2"/>
</dbReference>
<dbReference type="RefSeq" id="WP_000529340.1">
    <property type="nucleotide sequence ID" value="NC_003197.2"/>
</dbReference>
<dbReference type="PDB" id="4GVF">
    <property type="method" value="X-ray"/>
    <property type="resolution" value="1.35 A"/>
    <property type="chains" value="A/B=1-341"/>
</dbReference>
<dbReference type="PDB" id="4GVG">
    <property type="method" value="X-ray"/>
    <property type="resolution" value="1.70 A"/>
    <property type="chains" value="A/B=1-341"/>
</dbReference>
<dbReference type="PDB" id="4GVH">
    <property type="method" value="X-ray"/>
    <property type="resolution" value="1.45 A"/>
    <property type="chains" value="A/B=1-341"/>
</dbReference>
<dbReference type="PDB" id="4GVI">
    <property type="method" value="X-ray"/>
    <property type="resolution" value="1.55 A"/>
    <property type="chains" value="A/B=1-341"/>
</dbReference>
<dbReference type="PDB" id="4HZM">
    <property type="method" value="X-ray"/>
    <property type="resolution" value="1.45 A"/>
    <property type="chains" value="A/B=1-341"/>
</dbReference>
<dbReference type="PDBsum" id="4GVF"/>
<dbReference type="PDBsum" id="4GVG"/>
<dbReference type="PDBsum" id="4GVH"/>
<dbReference type="PDBsum" id="4GVI"/>
<dbReference type="PDBsum" id="4HZM"/>
<dbReference type="SMR" id="Q8ZQ06"/>
<dbReference type="STRING" id="99287.STM1209"/>
<dbReference type="CAZy" id="GH3">
    <property type="family name" value="Glycoside Hydrolase Family 3"/>
</dbReference>
<dbReference type="PaxDb" id="99287-STM1209"/>
<dbReference type="GeneID" id="1252727"/>
<dbReference type="KEGG" id="stm:STM1209"/>
<dbReference type="PATRIC" id="fig|99287.12.peg.1278"/>
<dbReference type="HOGENOM" id="CLU_008392_0_0_6"/>
<dbReference type="OMA" id="WQMAAEM"/>
<dbReference type="PhylomeDB" id="Q8ZQ06"/>
<dbReference type="BioCyc" id="SENT99287:STM1209-MONOMER"/>
<dbReference type="UniPathway" id="UPA00544"/>
<dbReference type="EvolutionaryTrace" id="Q8ZQ06"/>
<dbReference type="Proteomes" id="UP000001014">
    <property type="component" value="Chromosome"/>
</dbReference>
<dbReference type="GO" id="GO:0005829">
    <property type="term" value="C:cytosol"/>
    <property type="evidence" value="ECO:0000318"/>
    <property type="project" value="GO_Central"/>
</dbReference>
<dbReference type="GO" id="GO:0016231">
    <property type="term" value="F:beta-N-acetylglucosaminidase activity"/>
    <property type="evidence" value="ECO:0000318"/>
    <property type="project" value="GO_Central"/>
</dbReference>
<dbReference type="GO" id="GO:0005975">
    <property type="term" value="P:carbohydrate metabolic process"/>
    <property type="evidence" value="ECO:0007669"/>
    <property type="project" value="InterPro"/>
</dbReference>
<dbReference type="GO" id="GO:0051301">
    <property type="term" value="P:cell division"/>
    <property type="evidence" value="ECO:0007669"/>
    <property type="project" value="UniProtKB-KW"/>
</dbReference>
<dbReference type="GO" id="GO:0071555">
    <property type="term" value="P:cell wall organization"/>
    <property type="evidence" value="ECO:0007669"/>
    <property type="project" value="UniProtKB-KW"/>
</dbReference>
<dbReference type="GO" id="GO:0009252">
    <property type="term" value="P:peptidoglycan biosynthetic process"/>
    <property type="evidence" value="ECO:0007669"/>
    <property type="project" value="UniProtKB-KW"/>
</dbReference>
<dbReference type="GO" id="GO:0009254">
    <property type="term" value="P:peptidoglycan turnover"/>
    <property type="evidence" value="ECO:0000318"/>
    <property type="project" value="GO_Central"/>
</dbReference>
<dbReference type="GO" id="GO:0008360">
    <property type="term" value="P:regulation of cell shape"/>
    <property type="evidence" value="ECO:0007669"/>
    <property type="project" value="UniProtKB-KW"/>
</dbReference>
<dbReference type="GO" id="GO:0046677">
    <property type="term" value="P:response to antibiotic"/>
    <property type="evidence" value="ECO:0007669"/>
    <property type="project" value="UniProtKB-KW"/>
</dbReference>
<dbReference type="FunFam" id="3.20.20.300:FF:000001">
    <property type="entry name" value="Beta-hexosaminidase"/>
    <property type="match status" value="1"/>
</dbReference>
<dbReference type="Gene3D" id="3.20.20.300">
    <property type="entry name" value="Glycoside hydrolase, family 3, N-terminal domain"/>
    <property type="match status" value="1"/>
</dbReference>
<dbReference type="HAMAP" id="MF_00364">
    <property type="entry name" value="NagZ"/>
    <property type="match status" value="1"/>
</dbReference>
<dbReference type="InterPro" id="IPR022956">
    <property type="entry name" value="Beta_hexosaminidase_bac"/>
</dbReference>
<dbReference type="InterPro" id="IPR019800">
    <property type="entry name" value="Glyco_hydro_3_AS"/>
</dbReference>
<dbReference type="InterPro" id="IPR001764">
    <property type="entry name" value="Glyco_hydro_3_N"/>
</dbReference>
<dbReference type="InterPro" id="IPR036962">
    <property type="entry name" value="Glyco_hydro_3_N_sf"/>
</dbReference>
<dbReference type="InterPro" id="IPR017853">
    <property type="entry name" value="Glycoside_hydrolase_SF"/>
</dbReference>
<dbReference type="InterPro" id="IPR050226">
    <property type="entry name" value="NagZ_Beta-hexosaminidase"/>
</dbReference>
<dbReference type="NCBIfam" id="NF003740">
    <property type="entry name" value="PRK05337.1"/>
    <property type="match status" value="1"/>
</dbReference>
<dbReference type="PANTHER" id="PTHR30480:SF13">
    <property type="entry name" value="BETA-HEXOSAMINIDASE"/>
    <property type="match status" value="1"/>
</dbReference>
<dbReference type="PANTHER" id="PTHR30480">
    <property type="entry name" value="BETA-HEXOSAMINIDASE-RELATED"/>
    <property type="match status" value="1"/>
</dbReference>
<dbReference type="Pfam" id="PF00933">
    <property type="entry name" value="Glyco_hydro_3"/>
    <property type="match status" value="1"/>
</dbReference>
<dbReference type="SUPFAM" id="SSF51445">
    <property type="entry name" value="(Trans)glycosidases"/>
    <property type="match status" value="1"/>
</dbReference>
<dbReference type="PROSITE" id="PS00775">
    <property type="entry name" value="GLYCOSYL_HYDROL_F3"/>
    <property type="match status" value="1"/>
</dbReference>
<name>NAGZ_SALTY</name>
<protein>
    <recommendedName>
        <fullName evidence="1">Beta-hexosaminidase</fullName>
        <ecNumber evidence="1">3.2.1.52</ecNumber>
    </recommendedName>
    <alternativeName>
        <fullName evidence="1">Beta-N-acetylhexosaminidase</fullName>
    </alternativeName>
    <alternativeName>
        <fullName evidence="1">N-acetyl-beta-glucosaminidase</fullName>
    </alternativeName>
</protein>
<comment type="function">
    <text evidence="1 3 4">Plays a role in peptidoglycan recycling by cleaving the terminal beta-1,4-linked N-acetylglucosamine (GlcNAc) from peptide-linked peptidoglycan fragments, giving rise to free GlcNAc, anhydro-N-acetylmuramic acid and anhydro-N-acetylmuramic acid-linked peptides. Plays a role in beta-lactam antibiotic resistance via its role in generating anhydro-N-acetylmuramic acid-linked peptides; these peptides function as signaling molecules that induce high-level expression of the beta-lactamase AmpC.</text>
</comment>
<comment type="catalytic activity">
    <reaction evidence="1 3 4">
        <text>Hydrolysis of terminal non-reducing N-acetyl-D-hexosamine residues in N-acetyl-beta-D-hexosaminides.</text>
        <dbReference type="EC" id="3.2.1.52"/>
    </reaction>
</comment>
<comment type="pathway">
    <text evidence="1">Cell wall biogenesis; peptidoglycan recycling.</text>
</comment>
<comment type="subcellular location">
    <subcellularLocation>
        <location evidence="1">Cytoplasm</location>
    </subcellularLocation>
</comment>
<comment type="similarity">
    <text evidence="1">Belongs to the glycosyl hydrolase 3 family. NagZ subfamily.</text>
</comment>
<accession>Q8ZQ06</accession>
<gene>
    <name evidence="1" type="primary">nagZ</name>
    <name type="ordered locus">STM1209</name>
</gene>
<feature type="chain" id="PRO_0000210797" description="Beta-hexosaminidase">
    <location>
        <begin position="1"/>
        <end position="341"/>
    </location>
</feature>
<feature type="region of interest" description="Disordered" evidence="2">
    <location>
        <begin position="170"/>
        <end position="189"/>
    </location>
</feature>
<feature type="compositionally biased region" description="Basic and acidic residues" evidence="2">
    <location>
        <begin position="174"/>
        <end position="189"/>
    </location>
</feature>
<feature type="active site" description="Proton donor/acceptor" evidence="5">
    <location>
        <position position="176"/>
    </location>
</feature>
<feature type="active site" description="Nucleophile" evidence="1 3">
    <location>
        <position position="248"/>
    </location>
</feature>
<feature type="binding site">
    <location>
        <position position="62"/>
    </location>
    <ligand>
        <name>substrate</name>
    </ligand>
</feature>
<feature type="binding site" evidence="1">
    <location>
        <position position="70"/>
    </location>
    <ligand>
        <name>substrate</name>
    </ligand>
</feature>
<feature type="binding site">
    <location>
        <position position="133"/>
    </location>
    <ligand>
        <name>substrate</name>
    </ligand>
</feature>
<feature type="binding site">
    <location>
        <begin position="163"/>
        <end position="164"/>
    </location>
    <ligand>
        <name>substrate</name>
    </ligand>
</feature>
<feature type="site" description="Important for catalytic activity" evidence="1">
    <location>
        <position position="174"/>
    </location>
</feature>
<feature type="mutagenesis site" description="Reduced enzyme activity.">
    <original>H</original>
    <variation>G</variation>
    <location>
        <position position="176"/>
    </location>
</feature>
<feature type="mutagenesis site" description="Abolishes enzyme activity." evidence="3">
    <original>D</original>
    <variation>N</variation>
    <location>
        <position position="248"/>
    </location>
</feature>
<feature type="strand" evidence="6">
    <location>
        <begin position="3"/>
        <end position="6"/>
    </location>
</feature>
<feature type="strand" evidence="6">
    <location>
        <begin position="9"/>
        <end position="12"/>
    </location>
</feature>
<feature type="helix" evidence="6">
    <location>
        <begin position="15"/>
        <end position="21"/>
    </location>
</feature>
<feature type="strand" evidence="6">
    <location>
        <begin position="26"/>
        <end position="31"/>
    </location>
</feature>
<feature type="helix" evidence="6">
    <location>
        <begin position="33"/>
        <end position="35"/>
    </location>
</feature>
<feature type="helix" evidence="6">
    <location>
        <begin position="39"/>
        <end position="52"/>
    </location>
</feature>
<feature type="strand" evidence="6">
    <location>
        <begin position="58"/>
        <end position="61"/>
    </location>
</feature>
<feature type="strand" evidence="6">
    <location>
        <begin position="63"/>
        <end position="65"/>
    </location>
</feature>
<feature type="strand" evidence="6">
    <location>
        <begin position="68"/>
        <end position="70"/>
    </location>
</feature>
<feature type="helix" evidence="6">
    <location>
        <begin position="83"/>
        <end position="109"/>
    </location>
</feature>
<feature type="turn" evidence="6">
    <location>
        <begin position="110"/>
        <end position="112"/>
    </location>
</feature>
<feature type="turn" evidence="6">
    <location>
        <begin position="128"/>
        <end position="130"/>
    </location>
</feature>
<feature type="helix" evidence="6">
    <location>
        <begin position="131"/>
        <end position="133"/>
    </location>
</feature>
<feature type="helix" evidence="6">
    <location>
        <begin position="139"/>
        <end position="156"/>
    </location>
</feature>
<feature type="strand" evidence="6">
    <location>
        <begin position="161"/>
        <end position="165"/>
    </location>
</feature>
<feature type="strand" evidence="6">
    <location>
        <begin position="175"/>
        <end position="178"/>
    </location>
</feature>
<feature type="helix" evidence="6">
    <location>
        <begin position="186"/>
        <end position="191"/>
    </location>
</feature>
<feature type="helix" evidence="6">
    <location>
        <begin position="193"/>
        <end position="202"/>
    </location>
</feature>
<feature type="strand" evidence="6">
    <location>
        <begin position="207"/>
        <end position="211"/>
    </location>
</feature>
<feature type="turn" evidence="6">
    <location>
        <begin position="217"/>
        <end position="219"/>
    </location>
</feature>
<feature type="helix" evidence="6">
    <location>
        <begin position="224"/>
        <end position="226"/>
    </location>
</feature>
<feature type="helix" evidence="6">
    <location>
        <begin position="228"/>
        <end position="231"/>
    </location>
</feature>
<feature type="helix" evidence="6">
    <location>
        <begin position="232"/>
        <end position="238"/>
    </location>
</feature>
<feature type="strand" evidence="6">
    <location>
        <begin position="243"/>
        <end position="249"/>
    </location>
</feature>
<feature type="helix" evidence="6">
    <location>
        <begin position="250"/>
        <end position="252"/>
    </location>
</feature>
<feature type="helix" evidence="6">
    <location>
        <begin position="256"/>
        <end position="258"/>
    </location>
</feature>
<feature type="helix" evidence="6">
    <location>
        <begin position="261"/>
        <end position="271"/>
    </location>
</feature>
<feature type="strand" evidence="6">
    <location>
        <begin position="274"/>
        <end position="278"/>
    </location>
</feature>
<feature type="helix" evidence="6">
    <location>
        <begin position="282"/>
        <end position="291"/>
    </location>
</feature>
<feature type="helix" evidence="6">
    <location>
        <begin position="298"/>
        <end position="303"/>
    </location>
</feature>
<feature type="helix" evidence="6">
    <location>
        <begin position="311"/>
        <end position="316"/>
    </location>
</feature>
<feature type="helix" evidence="6">
    <location>
        <begin position="318"/>
        <end position="339"/>
    </location>
</feature>
<sequence length="341" mass="37698">MGPVMLNVEGCELDAEEREILAHPLVGGLILFTRNYHDPEQLRELVRQIRAASRNHLVVAVDQEGGRVQRFREGFTRLPAAQSFFALHGLEEGGRLAQEAGWLMASEMIAMDIDISFAPVLDVGHISAAIGERSYHADPAKALAMATRFIDGMHDAGMKTTGKHFPGHGAVTADSHKETPCDPRPETDIRGKDMSVFRTLISENKLDAIMPAHVIYRAIDPRPASGSPYWLKTVLRQELGFDGVIFSDDLSMEGAAIMGSYAERAQASLDAGCDMILVCNNRKGAVSVLDNLSPIKAERVTRLYHKGSFSRRELMDSARWKTASAQLNQLHERWQEEKAGH</sequence>
<proteinExistence type="evidence at protein level"/>
<reference key="1">
    <citation type="journal article" date="2001" name="Nature">
        <title>Complete genome sequence of Salmonella enterica serovar Typhimurium LT2.</title>
        <authorList>
            <person name="McClelland M."/>
            <person name="Sanderson K.E."/>
            <person name="Spieth J."/>
            <person name="Clifton S.W."/>
            <person name="Latreille P."/>
            <person name="Courtney L."/>
            <person name="Porwollik S."/>
            <person name="Ali J."/>
            <person name="Dante M."/>
            <person name="Du F."/>
            <person name="Hou S."/>
            <person name="Layman D."/>
            <person name="Leonard S."/>
            <person name="Nguyen C."/>
            <person name="Scott K."/>
            <person name="Holmes A."/>
            <person name="Grewal N."/>
            <person name="Mulvaney E."/>
            <person name="Ryan E."/>
            <person name="Sun H."/>
            <person name="Florea L."/>
            <person name="Miller W."/>
            <person name="Stoneking T."/>
            <person name="Nhan M."/>
            <person name="Waterston R."/>
            <person name="Wilson R.K."/>
        </authorList>
    </citation>
    <scope>NUCLEOTIDE SEQUENCE [LARGE SCALE GENOMIC DNA]</scope>
    <source>
        <strain>LT2 / SGSC1412 / ATCC 700720</strain>
    </source>
</reference>
<reference key="2">
    <citation type="journal article" date="2012" name="Chem. Biol.">
        <title>Active site plasticity within the glycoside hydrolase NagZ underlies a dynamic mechanism of substrate distortion.</title>
        <authorList>
            <person name="Bacik J.P."/>
            <person name="Whitworth G.E."/>
            <person name="Stubbs K.A."/>
            <person name="Vocadlo D.J."/>
            <person name="Mark B.L."/>
        </authorList>
    </citation>
    <scope>X-RAY CRYSTALLOGRAPHY (1.35 ANGSTROMS) IN COMPLEX WITH DISACCHARIDE SUBSTRATE</scope>
    <scope>CATALYTIC ACTIVITY</scope>
    <scope>FUNCTION</scope>
    <scope>ACTIVE SITE</scope>
    <scope>MUTAGENESIS OF ASP-248</scope>
</reference>
<reference key="3">
    <citation type="journal article" date="2013" name="ChemBioChem">
        <title>The development of selective inhibitors of NagZ: increased susceptibility of Gram-negative bacteria to beta-lactams.</title>
        <authorList>
            <person name="Stubbs K.A."/>
            <person name="Bacik J.P."/>
            <person name="Perley-Robertson G.E."/>
            <person name="Whitworth G.E."/>
            <person name="Gloster T.M."/>
            <person name="Vocadlo D.J."/>
            <person name="Mark B.L."/>
        </authorList>
    </citation>
    <scope>X-RAY CRYSTALLOGRAPHY (1.45 ANGSTROMS) IN COMPLEX WITH SYNTHETIC INHIBITOR</scope>
    <scope>FUNCTION</scope>
    <scope>CATALYTIC ACTIVITY</scope>
</reference>
<evidence type="ECO:0000255" key="1">
    <source>
        <dbReference type="HAMAP-Rule" id="MF_00364"/>
    </source>
</evidence>
<evidence type="ECO:0000256" key="2">
    <source>
        <dbReference type="SAM" id="MobiDB-lite"/>
    </source>
</evidence>
<evidence type="ECO:0000269" key="3">
    <source>
    </source>
</evidence>
<evidence type="ECO:0000269" key="4">
    <source>
    </source>
</evidence>
<evidence type="ECO:0000305" key="5">
    <source>
    </source>
</evidence>
<evidence type="ECO:0007829" key="6">
    <source>
        <dbReference type="PDB" id="4GVF"/>
    </source>
</evidence>
<organism>
    <name type="scientific">Salmonella typhimurium (strain LT2 / SGSC1412 / ATCC 700720)</name>
    <dbReference type="NCBI Taxonomy" id="99287"/>
    <lineage>
        <taxon>Bacteria</taxon>
        <taxon>Pseudomonadati</taxon>
        <taxon>Pseudomonadota</taxon>
        <taxon>Gammaproteobacteria</taxon>
        <taxon>Enterobacterales</taxon>
        <taxon>Enterobacteriaceae</taxon>
        <taxon>Salmonella</taxon>
    </lineage>
</organism>